<organism>
    <name type="scientific">Salmonella typhi</name>
    <dbReference type="NCBI Taxonomy" id="90370"/>
    <lineage>
        <taxon>Bacteria</taxon>
        <taxon>Pseudomonadati</taxon>
        <taxon>Pseudomonadota</taxon>
        <taxon>Gammaproteobacteria</taxon>
        <taxon>Enterobacterales</taxon>
        <taxon>Enterobacteriaceae</taxon>
        <taxon>Salmonella</taxon>
    </lineage>
</organism>
<gene>
    <name type="ordered locus">STY3668</name>
    <name type="ordered locus">t3410</name>
</gene>
<sequence length="804" mass="92495">MSHADMNNCSGFNEAAAAFSWNSPKKAINPYLDLAEVAPVSALSNLITLYAADNEQEQLRREALSDQVWERYFFNESRDPVQREMEQDKFISRAKLAHEQQRFNPDMVILADVNAQPSHISRPLMQRIEYFSSLGRPKAYSRYLRETIKPCLERLEHVRDSQLSTSFRFMASHEGLDGLLILPEMSQDQVKRLSTLVAAHMSMCLDAACGDLYATDDVKPEEIRKTWEKVAAETLRLDVIPPAFEQLRRKRNRRKPVPYELIPGSLARMLCADWWYRKLWKMRCEWREEQLRAVCLVSKKASPYVSYEAMMHKREQRRKSLEFFRSHELVNEDGDTLDMEDVVNASSSNPAHRRNEMMACVKGLELIAEMRGDCAVFYTITCPSRFHSTLNNGRPNPTWTNTTVRQSSDYLVGMFAAFRKAMHKAGLRWYGVRVAEPHHDGTVHWHLLCFMRKKDRRTITALLRKFAIREDREELGNNTGPRFKSELINPRKGTPTSYIAKYISKNIDGRGLAGEISKETGKSLRDNAEYVNAWASLHRVQQFRFFGIPGRQAYRELRLLAGQAARQQGDKKAGAPVLDNPRLDAILAAADAGCFATYIMKQGGVLVPRKYHLIRTAYEINEEPTAYGDHGIRIYGIWSPIAEGKICTHAVKWKMVRKAVDVQEAAADQGACAPWTRGNNCPLAENLNQHEKDKSADGDTRTDITCMDDKELHDYLHSMGKKEHRELAARLRLVKPKRRKDHKQRITEHQRQQLVYELKSRGFDGSEKEVDLLLRGGSIPSGAGLRIFYRNQRLQEDDKWRDLY</sequence>
<reference key="1">
    <citation type="journal article" date="2001" name="Nature">
        <title>Complete genome sequence of a multiple drug resistant Salmonella enterica serovar Typhi CT18.</title>
        <authorList>
            <person name="Parkhill J."/>
            <person name="Dougan G."/>
            <person name="James K.D."/>
            <person name="Thomson N.R."/>
            <person name="Pickard D."/>
            <person name="Wain J."/>
            <person name="Churcher C.M."/>
            <person name="Mungall K.L."/>
            <person name="Bentley S.D."/>
            <person name="Holden M.T.G."/>
            <person name="Sebaihia M."/>
            <person name="Baker S."/>
            <person name="Basham D."/>
            <person name="Brooks K."/>
            <person name="Chillingworth T."/>
            <person name="Connerton P."/>
            <person name="Cronin A."/>
            <person name="Davis P."/>
            <person name="Davies R.M."/>
            <person name="Dowd L."/>
            <person name="White N."/>
            <person name="Farrar J."/>
            <person name="Feltwell T."/>
            <person name="Hamlin N."/>
            <person name="Haque A."/>
            <person name="Hien T.T."/>
            <person name="Holroyd S."/>
            <person name="Jagels K."/>
            <person name="Krogh A."/>
            <person name="Larsen T.S."/>
            <person name="Leather S."/>
            <person name="Moule S."/>
            <person name="O'Gaora P."/>
            <person name="Parry C."/>
            <person name="Quail M.A."/>
            <person name="Rutherford K.M."/>
            <person name="Simmonds M."/>
            <person name="Skelton J."/>
            <person name="Stevens K."/>
            <person name="Whitehead S."/>
            <person name="Barrell B.G."/>
        </authorList>
    </citation>
    <scope>NUCLEOTIDE SEQUENCE [LARGE SCALE GENOMIC DNA]</scope>
    <source>
        <strain>CT18</strain>
    </source>
</reference>
<reference key="2">
    <citation type="journal article" date="2003" name="J. Bacteriol.">
        <title>Comparative genomics of Salmonella enterica serovar Typhi strains Ty2 and CT18.</title>
        <authorList>
            <person name="Deng W."/>
            <person name="Liou S.-R."/>
            <person name="Plunkett G. III"/>
            <person name="Mayhew G.F."/>
            <person name="Rose D.J."/>
            <person name="Burland V."/>
            <person name="Kodoyianni V."/>
            <person name="Schwartz D.C."/>
            <person name="Blattner F.R."/>
        </authorList>
    </citation>
    <scope>NUCLEOTIDE SEQUENCE [LARGE SCALE GENOMIC DNA]</scope>
    <source>
        <strain>ATCC 700931 / Ty2</strain>
    </source>
</reference>
<feature type="chain" id="PRO_0000278166" description="Probable replication endonuclease from prophage-like region 1">
    <location>
        <begin position="1"/>
        <end position="804"/>
    </location>
</feature>
<feature type="active site" description="O-(5'-phospho-DNA)-tyrosine intermediate" evidence="1">
    <location>
        <position position="498"/>
    </location>
</feature>
<feature type="active site" description="O-(5'-phospho-DNA)-tyrosine intermediate" evidence="1">
    <location>
        <position position="502"/>
    </location>
</feature>
<evidence type="ECO:0000250" key="1"/>
<evidence type="ECO:0000305" key="2"/>
<name>ENDP1_SALTI</name>
<accession>Q8Z365</accession>
<accession>Q7C6T0</accession>
<proteinExistence type="inferred from homology"/>
<protein>
    <recommendedName>
        <fullName>Probable replication endonuclease from prophage-like region 1</fullName>
        <ecNumber>3.1.-.-</ecNumber>
    </recommendedName>
</protein>
<keyword id="KW-0235">DNA replication</keyword>
<keyword id="KW-0255">Endonuclease</keyword>
<keyword id="KW-0378">Hydrolase</keyword>
<keyword id="KW-0540">Nuclease</keyword>
<dbReference type="EC" id="3.1.-.-"/>
<dbReference type="EMBL" id="AL513382">
    <property type="protein sequence ID" value="CAD09429.1"/>
    <property type="molecule type" value="Genomic_DNA"/>
</dbReference>
<dbReference type="EMBL" id="AE014613">
    <property type="protein sequence ID" value="AAO70933.1"/>
    <property type="molecule type" value="Genomic_DNA"/>
</dbReference>
<dbReference type="RefSeq" id="NP_457859.1">
    <property type="nucleotide sequence ID" value="NC_003198.1"/>
</dbReference>
<dbReference type="RefSeq" id="WP_000017503.1">
    <property type="nucleotide sequence ID" value="NZ_WSUR01000054.1"/>
</dbReference>
<dbReference type="STRING" id="220341.gene:17587524"/>
<dbReference type="KEGG" id="stt:t3410"/>
<dbReference type="KEGG" id="sty:STY3668"/>
<dbReference type="PATRIC" id="fig|220341.7.peg.3737"/>
<dbReference type="eggNOG" id="ENOG502Z7TX">
    <property type="taxonomic scope" value="Bacteria"/>
</dbReference>
<dbReference type="HOGENOM" id="CLU_013772_2_0_6"/>
<dbReference type="OMA" id="ACGDLYA"/>
<dbReference type="OrthoDB" id="5568266at2"/>
<dbReference type="Proteomes" id="UP000000541">
    <property type="component" value="Chromosome"/>
</dbReference>
<dbReference type="Proteomes" id="UP000002670">
    <property type="component" value="Chromosome"/>
</dbReference>
<dbReference type="GO" id="GO:0004519">
    <property type="term" value="F:endonuclease activity"/>
    <property type="evidence" value="ECO:0007669"/>
    <property type="project" value="UniProtKB-KW"/>
</dbReference>
<dbReference type="GO" id="GO:0006260">
    <property type="term" value="P:DNA replication"/>
    <property type="evidence" value="ECO:0007669"/>
    <property type="project" value="UniProtKB-KW"/>
</dbReference>
<dbReference type="InterPro" id="IPR008766">
    <property type="entry name" value="Replication_gene_A-like"/>
</dbReference>
<dbReference type="Pfam" id="PF05840">
    <property type="entry name" value="Phage_GPA"/>
    <property type="match status" value="1"/>
</dbReference>
<comment type="function">
    <text evidence="2">Possible endonuclease which induces a single-strand cut and initiates DNA replication.</text>
</comment>
<comment type="similarity">
    <text evidence="2">Belongs to the phage GPA family.</text>
</comment>